<keyword id="KW-0223">Dioxygenase</keyword>
<keyword id="KW-0284">Flavonoid biosynthesis</keyword>
<keyword id="KW-0408">Iron</keyword>
<keyword id="KW-0479">Metal-binding</keyword>
<keyword id="KW-0560">Oxidoreductase</keyword>
<keyword id="KW-1185">Reference proteome</keyword>
<keyword id="KW-0847">Vitamin C</keyword>
<accession>Q7XR84</accession>
<accession>Q0J988</accession>
<evidence type="ECO:0000250" key="1"/>
<evidence type="ECO:0000255" key="2">
    <source>
        <dbReference type="PROSITE-ProRule" id="PRU00805"/>
    </source>
</evidence>
<evidence type="ECO:0000256" key="3">
    <source>
        <dbReference type="SAM" id="MobiDB-lite"/>
    </source>
</evidence>
<evidence type="ECO:0000269" key="4">
    <source>
    </source>
</evidence>
<evidence type="ECO:0000269" key="5">
    <source>
    </source>
</evidence>
<evidence type="ECO:0000303" key="6">
    <source>
    </source>
</evidence>
<evidence type="ECO:0000303" key="7">
    <source>
    </source>
</evidence>
<evidence type="ECO:0000305" key="8"/>
<evidence type="ECO:0000312" key="9">
    <source>
        <dbReference type="EMBL" id="BAS91520.1"/>
    </source>
</evidence>
<evidence type="ECO:0000312" key="10">
    <source>
        <dbReference type="EMBL" id="CAE02796.1"/>
    </source>
</evidence>
<proteinExistence type="evidence at protein level"/>
<protein>
    <recommendedName>
        <fullName evidence="8">Flavanone 3-dioxygenase 3</fullName>
        <ecNumber evidence="4">1.14.11.9</ecNumber>
    </recommendedName>
    <alternativeName>
        <fullName evidence="8">Flavanone 3-beta-hydroxylase 3</fullName>
    </alternativeName>
    <alternativeName>
        <fullName evidence="6">Flavanone 3-hydroxylase 3</fullName>
        <shortName evidence="6">OsF3H-3</shortName>
    </alternativeName>
    <alternativeName>
        <fullName evidence="7">Flavonoid 3-hydroxylase</fullName>
        <shortName evidence="7">OsF3H</shortName>
    </alternativeName>
</protein>
<comment type="function">
    <text evidence="4 5">Catalyzes the 3-beta-hydroxylation of 2S-flavanones to 2R,3R-dihydroflavonols which are intermediates in the biosynthesis of flavonols, anthocyanidins, catechins and proanthocyanidins in plants (PubMed:18413994, PubMed:18726614). Converts (2S)-eriodictyol to (+)-taxifolin and (2S)-naringenin to (+)-(2R/3R)-dihydrokaempferol in vitro (PubMed:18413994).</text>
</comment>
<comment type="catalytic activity">
    <reaction evidence="4">
        <text>a (2S)-flavan-4-one + 2-oxoglutarate + O2 = a (2R,3R)-dihydroflavonol + succinate + CO2</text>
        <dbReference type="Rhea" id="RHEA:18621"/>
        <dbReference type="ChEBI" id="CHEBI:15379"/>
        <dbReference type="ChEBI" id="CHEBI:16526"/>
        <dbReference type="ChEBI" id="CHEBI:16810"/>
        <dbReference type="ChEBI" id="CHEBI:30031"/>
        <dbReference type="ChEBI" id="CHEBI:138188"/>
        <dbReference type="ChEBI" id="CHEBI:140377"/>
        <dbReference type="EC" id="1.14.11.9"/>
    </reaction>
</comment>
<comment type="cofactor">
    <cofactor evidence="2">
        <name>Fe(2+)</name>
        <dbReference type="ChEBI" id="CHEBI:29033"/>
    </cofactor>
    <text evidence="2">Binds 1 Fe(2+) ion per subunit.</text>
</comment>
<comment type="cofactor">
    <cofactor evidence="1">
        <name>L-ascorbate</name>
        <dbReference type="ChEBI" id="CHEBI:38290"/>
    </cofactor>
</comment>
<comment type="biophysicochemical properties">
    <kinetics>
        <KM evidence="4">6.3 uM for S-eriodictyol</KM>
        <Vmax evidence="4">0.5 umol/sec/mg enzyme toward S-eriodictyol</Vmax>
    </kinetics>
</comment>
<comment type="pathway">
    <text evidence="8">Secondary metabolite biosynthesis; flavonoid biosynthesis.</text>
</comment>
<comment type="tissue specificity">
    <text evidence="4">Expressed at very low levels in roots, leaves, stems and seeds.</text>
</comment>
<comment type="induction">
    <text evidence="5">Induced by light.</text>
</comment>
<comment type="similarity">
    <text evidence="8">Belongs to the iron/ascorbate-dependent oxidoreductase family.</text>
</comment>
<comment type="sequence caution" evidence="8">
    <conflict type="erroneous gene model prediction">
        <sequence resource="EMBL-CDS" id="BAF16099"/>
    </conflict>
</comment>
<sequence>MSDTSKGIPQEQLPSQELHPPPMPVINLGHLSLDDPTVRSRVVNDIAKACRDLGYFQVISHGISQSVMDGAIEAASEFFKLPNEIKKEYASDDIRQPVRYDTSSKDGISMSRAFLKHYAHPLCDWLQYWPQQPPIYREYMAKYAVEVRVVALKLMEAILEGLGIGKEYMQEKFEEGLQLLSVNCYPKVSQSDTSIGLAAHSDYGLLTILLTSCQGLEVVDRSSNSWKVVQQLPHALHVHVGDHMEVLSNGRIKTVVHRAVLNPQEARISLASIHGFALHEKVSSAKELVDEENPQKYKENSFNDFLEHLTANMDNRQRNFLESLRM</sequence>
<gene>
    <name evidence="7" type="primary">F3H-3</name>
    <name evidence="7" type="synonym">F3H</name>
    <name evidence="9" type="ordered locus">Os04g0667200</name>
    <name evidence="8" type="ordered locus">LOC_Os04g57160</name>
    <name evidence="10" type="ORF">OSJNBa0043A12.1</name>
</gene>
<organism>
    <name type="scientific">Oryza sativa subsp. japonica</name>
    <name type="common">Rice</name>
    <dbReference type="NCBI Taxonomy" id="39947"/>
    <lineage>
        <taxon>Eukaryota</taxon>
        <taxon>Viridiplantae</taxon>
        <taxon>Streptophyta</taxon>
        <taxon>Embryophyta</taxon>
        <taxon>Tracheophyta</taxon>
        <taxon>Spermatophyta</taxon>
        <taxon>Magnoliopsida</taxon>
        <taxon>Liliopsida</taxon>
        <taxon>Poales</taxon>
        <taxon>Poaceae</taxon>
        <taxon>BOP clade</taxon>
        <taxon>Oryzoideae</taxon>
        <taxon>Oryzeae</taxon>
        <taxon>Oryzinae</taxon>
        <taxon>Oryza</taxon>
        <taxon>Oryza sativa</taxon>
    </lineage>
</organism>
<name>FL3H3_ORYSJ</name>
<dbReference type="EC" id="1.14.11.9" evidence="4"/>
<dbReference type="EMBL" id="AL606619">
    <property type="protein sequence ID" value="CAE02796.1"/>
    <property type="molecule type" value="Genomic_DNA"/>
</dbReference>
<dbReference type="EMBL" id="AP008210">
    <property type="protein sequence ID" value="BAF16099.2"/>
    <property type="status" value="ALT_SEQ"/>
    <property type="molecule type" value="Genomic_DNA"/>
</dbReference>
<dbReference type="EMBL" id="AP014960">
    <property type="protein sequence ID" value="BAS91520.1"/>
    <property type="molecule type" value="Genomic_DNA"/>
</dbReference>
<dbReference type="SMR" id="Q7XR84"/>
<dbReference type="FunCoup" id="Q7XR84">
    <property type="interactions" value="96"/>
</dbReference>
<dbReference type="STRING" id="39947.Q7XR84"/>
<dbReference type="PaxDb" id="39947-Q7XR84"/>
<dbReference type="EnsemblPlants" id="Os04t0667200-01">
    <property type="protein sequence ID" value="Os04t0667200-01"/>
    <property type="gene ID" value="Os04g0667200"/>
</dbReference>
<dbReference type="Gramene" id="Os04t0667200-01">
    <property type="protein sequence ID" value="Os04t0667200-01"/>
    <property type="gene ID" value="Os04g0667200"/>
</dbReference>
<dbReference type="KEGG" id="dosa:Os04g0667200"/>
<dbReference type="KEGG" id="osa:4337325"/>
<dbReference type="eggNOG" id="KOG0143">
    <property type="taxonomic scope" value="Eukaryota"/>
</dbReference>
<dbReference type="HOGENOM" id="CLU_010119_16_4_1"/>
<dbReference type="InParanoid" id="Q7XR84"/>
<dbReference type="OMA" id="HYAHPLC"/>
<dbReference type="OrthoDB" id="627829at2759"/>
<dbReference type="BRENDA" id="1.14.11.9">
    <property type="organism ID" value="4460"/>
</dbReference>
<dbReference type="UniPathway" id="UPA00154"/>
<dbReference type="Proteomes" id="UP000000763">
    <property type="component" value="Chromosome 4"/>
</dbReference>
<dbReference type="Proteomes" id="UP000059680">
    <property type="component" value="Chromosome 4"/>
</dbReference>
<dbReference type="GO" id="GO:0045486">
    <property type="term" value="F:flavanone 3-dioxygenase activity"/>
    <property type="evidence" value="ECO:0007669"/>
    <property type="project" value="UniProtKB-EC"/>
</dbReference>
<dbReference type="GO" id="GO:0031418">
    <property type="term" value="F:L-ascorbic acid binding"/>
    <property type="evidence" value="ECO:0007669"/>
    <property type="project" value="UniProtKB-KW"/>
</dbReference>
<dbReference type="GO" id="GO:0046872">
    <property type="term" value="F:metal ion binding"/>
    <property type="evidence" value="ECO:0007669"/>
    <property type="project" value="UniProtKB-KW"/>
</dbReference>
<dbReference type="GO" id="GO:0009813">
    <property type="term" value="P:flavonoid biosynthetic process"/>
    <property type="evidence" value="ECO:0007669"/>
    <property type="project" value="UniProtKB-UniPathway"/>
</dbReference>
<dbReference type="FunFam" id="2.60.120.330:FF:000029">
    <property type="entry name" value="KAR-UP oxidoreductase 1"/>
    <property type="match status" value="1"/>
</dbReference>
<dbReference type="Gene3D" id="2.60.120.330">
    <property type="entry name" value="B-lactam Antibiotic, Isopenicillin N Synthase, Chain"/>
    <property type="match status" value="1"/>
</dbReference>
<dbReference type="InterPro" id="IPR026992">
    <property type="entry name" value="DIOX_N"/>
</dbReference>
<dbReference type="InterPro" id="IPR044861">
    <property type="entry name" value="IPNS-like_FE2OG_OXY"/>
</dbReference>
<dbReference type="InterPro" id="IPR027443">
    <property type="entry name" value="IPNS-like_sf"/>
</dbReference>
<dbReference type="InterPro" id="IPR005123">
    <property type="entry name" value="Oxoglu/Fe-dep_dioxygenase_dom"/>
</dbReference>
<dbReference type="InterPro" id="IPR050295">
    <property type="entry name" value="Plant_2OG-oxidoreductases"/>
</dbReference>
<dbReference type="PANTHER" id="PTHR47991">
    <property type="entry name" value="OXOGLUTARATE/IRON-DEPENDENT DIOXYGENASE"/>
    <property type="match status" value="1"/>
</dbReference>
<dbReference type="Pfam" id="PF03171">
    <property type="entry name" value="2OG-FeII_Oxy"/>
    <property type="match status" value="1"/>
</dbReference>
<dbReference type="Pfam" id="PF14226">
    <property type="entry name" value="DIOX_N"/>
    <property type="match status" value="1"/>
</dbReference>
<dbReference type="SUPFAM" id="SSF51197">
    <property type="entry name" value="Clavaminate synthase-like"/>
    <property type="match status" value="1"/>
</dbReference>
<dbReference type="PROSITE" id="PS51471">
    <property type="entry name" value="FE2OG_OXY"/>
    <property type="match status" value="1"/>
</dbReference>
<feature type="chain" id="PRO_0000440774" description="Flavanone 3-dioxygenase 3">
    <location>
        <begin position="1"/>
        <end position="326"/>
    </location>
</feature>
<feature type="domain" description="Fe2OG dioxygenase" evidence="2">
    <location>
        <begin position="175"/>
        <end position="276"/>
    </location>
</feature>
<feature type="region of interest" description="Disordered" evidence="3">
    <location>
        <begin position="1"/>
        <end position="21"/>
    </location>
</feature>
<feature type="compositionally biased region" description="Polar residues" evidence="3">
    <location>
        <begin position="1"/>
        <end position="15"/>
    </location>
</feature>
<feature type="binding site" evidence="2">
    <location>
        <position position="200"/>
    </location>
    <ligand>
        <name>Fe cation</name>
        <dbReference type="ChEBI" id="CHEBI:24875"/>
    </ligand>
</feature>
<feature type="binding site" evidence="2">
    <location>
        <position position="202"/>
    </location>
    <ligand>
        <name>Fe cation</name>
        <dbReference type="ChEBI" id="CHEBI:24875"/>
    </ligand>
</feature>
<feature type="binding site" evidence="2">
    <location>
        <position position="257"/>
    </location>
    <ligand>
        <name>Fe cation</name>
        <dbReference type="ChEBI" id="CHEBI:24875"/>
    </ligand>
</feature>
<feature type="binding site" evidence="2">
    <location>
        <position position="267"/>
    </location>
    <ligand>
        <name>2-oxoglutarate</name>
        <dbReference type="ChEBI" id="CHEBI:16810"/>
    </ligand>
</feature>
<reference key="1">
    <citation type="journal article" date="2002" name="Nature">
        <title>Sequence and analysis of rice chromosome 4.</title>
        <authorList>
            <person name="Feng Q."/>
            <person name="Zhang Y."/>
            <person name="Hao P."/>
            <person name="Wang S."/>
            <person name="Fu G."/>
            <person name="Huang Y."/>
            <person name="Li Y."/>
            <person name="Zhu J."/>
            <person name="Liu Y."/>
            <person name="Hu X."/>
            <person name="Jia P."/>
            <person name="Zhang Y."/>
            <person name="Zhao Q."/>
            <person name="Ying K."/>
            <person name="Yu S."/>
            <person name="Tang Y."/>
            <person name="Weng Q."/>
            <person name="Zhang L."/>
            <person name="Lu Y."/>
            <person name="Mu J."/>
            <person name="Lu Y."/>
            <person name="Zhang L.S."/>
            <person name="Yu Z."/>
            <person name="Fan D."/>
            <person name="Liu X."/>
            <person name="Lu T."/>
            <person name="Li C."/>
            <person name="Wu Y."/>
            <person name="Sun T."/>
            <person name="Lei H."/>
            <person name="Li T."/>
            <person name="Hu H."/>
            <person name="Guan J."/>
            <person name="Wu M."/>
            <person name="Zhang R."/>
            <person name="Zhou B."/>
            <person name="Chen Z."/>
            <person name="Chen L."/>
            <person name="Jin Z."/>
            <person name="Wang R."/>
            <person name="Yin H."/>
            <person name="Cai Z."/>
            <person name="Ren S."/>
            <person name="Lv G."/>
            <person name="Gu W."/>
            <person name="Zhu G."/>
            <person name="Tu Y."/>
            <person name="Jia J."/>
            <person name="Zhang Y."/>
            <person name="Chen J."/>
            <person name="Kang H."/>
            <person name="Chen X."/>
            <person name="Shao C."/>
            <person name="Sun Y."/>
            <person name="Hu Q."/>
            <person name="Zhang X."/>
            <person name="Zhang W."/>
            <person name="Wang L."/>
            <person name="Ding C."/>
            <person name="Sheng H."/>
            <person name="Gu J."/>
            <person name="Chen S."/>
            <person name="Ni L."/>
            <person name="Zhu F."/>
            <person name="Chen W."/>
            <person name="Lan L."/>
            <person name="Lai Y."/>
            <person name="Cheng Z."/>
            <person name="Gu M."/>
            <person name="Jiang J."/>
            <person name="Li J."/>
            <person name="Hong G."/>
            <person name="Xue Y."/>
            <person name="Han B."/>
        </authorList>
    </citation>
    <scope>NUCLEOTIDE SEQUENCE [LARGE SCALE GENOMIC DNA]</scope>
    <source>
        <strain>cv. Nipponbare</strain>
    </source>
</reference>
<reference key="2">
    <citation type="journal article" date="2005" name="Nature">
        <title>The map-based sequence of the rice genome.</title>
        <authorList>
            <consortium name="International rice genome sequencing project (IRGSP)"/>
        </authorList>
    </citation>
    <scope>NUCLEOTIDE SEQUENCE [LARGE SCALE GENOMIC DNA]</scope>
    <source>
        <strain>cv. Nipponbare</strain>
    </source>
</reference>
<reference key="3">
    <citation type="journal article" date="2008" name="Nucleic Acids Res.">
        <title>The rice annotation project database (RAP-DB): 2008 update.</title>
        <authorList>
            <consortium name="The rice annotation project (RAP)"/>
        </authorList>
    </citation>
    <scope>GENOME REANNOTATION</scope>
    <source>
        <strain>cv. Nipponbare</strain>
    </source>
</reference>
<reference key="4">
    <citation type="journal article" date="2013" name="Rice">
        <title>Improvement of the Oryza sativa Nipponbare reference genome using next generation sequence and optical map data.</title>
        <authorList>
            <person name="Kawahara Y."/>
            <person name="de la Bastide M."/>
            <person name="Hamilton J.P."/>
            <person name="Kanamori H."/>
            <person name="McCombie W.R."/>
            <person name="Ouyang S."/>
            <person name="Schwartz D.C."/>
            <person name="Tanaka T."/>
            <person name="Wu J."/>
            <person name="Zhou S."/>
            <person name="Childs K.L."/>
            <person name="Davidson R.M."/>
            <person name="Lin H."/>
            <person name="Quesada-Ocampo L."/>
            <person name="Vaillancourt B."/>
            <person name="Sakai H."/>
            <person name="Lee S.S."/>
            <person name="Kim J."/>
            <person name="Numa H."/>
            <person name="Itoh T."/>
            <person name="Buell C.R."/>
            <person name="Matsumoto T."/>
        </authorList>
    </citation>
    <scope>GENOME REANNOTATION</scope>
    <source>
        <strain>cv. Nipponbare</strain>
    </source>
</reference>
<reference key="5">
    <citation type="journal article" date="2008" name="Mol. Cells">
        <title>Flavanone 3beta-hydroxylases from rice: key enzymes for favonol and anthocyanin biosynthesis.</title>
        <authorList>
            <person name="Kim J.H."/>
            <person name="Lee Y.J."/>
            <person name="Kim B.G."/>
            <person name="Lim Y."/>
            <person name="Ahn J.H."/>
        </authorList>
    </citation>
    <scope>FUNCTION</scope>
    <scope>CATALYTIC ACTIVITY</scope>
    <scope>BIOPHYSICOCHEMICAL PROPERTIES</scope>
    <scope>TISSUE SPECIFICITY</scope>
</reference>
<reference key="6">
    <citation type="journal article" date="2008" name="Planta">
        <title>Functional characterization of key structural genes in rice flavonoid biosynthesis.</title>
        <authorList>
            <person name="Shih C.H."/>
            <person name="Chu H."/>
            <person name="Tang L.K."/>
            <person name="Sakamoto W."/>
            <person name="Maekawa M."/>
            <person name="Chu I.K."/>
            <person name="Wang M."/>
            <person name="Lo C."/>
        </authorList>
    </citation>
    <scope>FUNCTION</scope>
    <scope>INDUCTION BY LIGHT</scope>
</reference>